<comment type="function">
    <text evidence="1">Bidirectionally degrades single-stranded DNA into large acid-insoluble oligonucleotides, which are then degraded further into small acid-soluble oligonucleotides.</text>
</comment>
<comment type="catalytic activity">
    <reaction evidence="1">
        <text>Exonucleolytic cleavage in either 5'- to 3'- or 3'- to 5'-direction to yield nucleoside 5'-phosphates.</text>
        <dbReference type="EC" id="3.1.11.6"/>
    </reaction>
</comment>
<comment type="subunit">
    <text evidence="1">Heterooligomer composed of large and small subunits.</text>
</comment>
<comment type="subcellular location">
    <subcellularLocation>
        <location evidence="1">Cytoplasm</location>
    </subcellularLocation>
</comment>
<comment type="similarity">
    <text evidence="1">Belongs to the XseA family.</text>
</comment>
<reference key="1">
    <citation type="journal article" date="2003" name="Proc. Natl. Acad. Sci. U.S.A.">
        <title>Complete genome sequence of Lactobacillus plantarum WCFS1.</title>
        <authorList>
            <person name="Kleerebezem M."/>
            <person name="Boekhorst J."/>
            <person name="van Kranenburg R."/>
            <person name="Molenaar D."/>
            <person name="Kuipers O.P."/>
            <person name="Leer R."/>
            <person name="Tarchini R."/>
            <person name="Peters S.A."/>
            <person name="Sandbrink H.M."/>
            <person name="Fiers M.W.E.J."/>
            <person name="Stiekema W."/>
            <person name="Klein Lankhorst R.M."/>
            <person name="Bron P.A."/>
            <person name="Hoffer S.M."/>
            <person name="Nierop Groot M.N."/>
            <person name="Kerkhoven R."/>
            <person name="De Vries M."/>
            <person name="Ursing B."/>
            <person name="De Vos W.M."/>
            <person name="Siezen R.J."/>
        </authorList>
    </citation>
    <scope>NUCLEOTIDE SEQUENCE [LARGE SCALE GENOMIC DNA]</scope>
    <source>
        <strain>ATCC BAA-793 / NCIMB 8826 / WCFS1</strain>
    </source>
</reference>
<reference key="2">
    <citation type="journal article" date="2012" name="J. Bacteriol.">
        <title>Complete resequencing and reannotation of the Lactobacillus plantarum WCFS1 genome.</title>
        <authorList>
            <person name="Siezen R.J."/>
            <person name="Francke C."/>
            <person name="Renckens B."/>
            <person name="Boekhorst J."/>
            <person name="Wels M."/>
            <person name="Kleerebezem M."/>
            <person name="van Hijum S.A."/>
        </authorList>
    </citation>
    <scope>NUCLEOTIDE SEQUENCE [LARGE SCALE GENOMIC DNA]</scope>
    <scope>GENOME REANNOTATION</scope>
    <source>
        <strain>ATCC BAA-793 / NCIMB 8826 / WCFS1</strain>
    </source>
</reference>
<protein>
    <recommendedName>
        <fullName evidence="1">Exodeoxyribonuclease 7 large subunit</fullName>
        <ecNumber evidence="1">3.1.11.6</ecNumber>
    </recommendedName>
    <alternativeName>
        <fullName evidence="1">Exodeoxyribonuclease VII large subunit</fullName>
        <shortName evidence="1">Exonuclease VII large subunit</shortName>
    </alternativeName>
</protein>
<evidence type="ECO:0000255" key="1">
    <source>
        <dbReference type="HAMAP-Rule" id="MF_00378"/>
    </source>
</evidence>
<keyword id="KW-0963">Cytoplasm</keyword>
<keyword id="KW-0269">Exonuclease</keyword>
<keyword id="KW-0378">Hydrolase</keyword>
<keyword id="KW-0540">Nuclease</keyword>
<keyword id="KW-1185">Reference proteome</keyword>
<feature type="chain" id="PRO_0000197853" description="Exodeoxyribonuclease 7 large subunit">
    <location>
        <begin position="1"/>
        <end position="447"/>
    </location>
</feature>
<sequence length="447" mass="50494">MSESQQYLTVTALTQYLKRKFEVDPYLGKVYLTGEVSNYRPRPNTHQYFSLKDDHAKISAIMFKSAFAKVKFQPEEGMKVLVVGRIGLYEPSGSYQIYVERMEPDGVGALYQAYEQLKKKLAAEGLFSAPKKPLPRFPKRIAVVTSRSGAVIRDIITTTRRRFPIAQIVLFPSQVQGDAAAAEISRQIERANAQGDFDTLIIGRGGGSIEDLWPFNEEVVARAIAQSQLPVISSVGHETDTTIADLVADVRAATPTAAAELAVPVYNDVLLQLKQDQTRVFNAFQNFVQRDRQRLNKLQTSYVFTQPNRLYEGYLQKLDFLNERLKQAGQNNFNLASQHYQRVFQQLRQQTPIHQVRQAQTQLLNLQQRLNRGTQLVVRQKRQQLTQTVQSLDLLSPLKIMTRGYAFVTADEQVVHGVKQLQPEQTVAIHMADGEAQAQITKIDGGK</sequence>
<dbReference type="EC" id="3.1.11.6" evidence="1"/>
<dbReference type="EMBL" id="AL935263">
    <property type="protein sequence ID" value="CCC78914.1"/>
    <property type="molecule type" value="Genomic_DNA"/>
</dbReference>
<dbReference type="RefSeq" id="WP_003645161.1">
    <property type="nucleotide sequence ID" value="NC_004567.2"/>
</dbReference>
<dbReference type="RefSeq" id="YP_004889428.1">
    <property type="nucleotide sequence ID" value="NC_004567.2"/>
</dbReference>
<dbReference type="SMR" id="Q88WM7"/>
<dbReference type="STRING" id="220668.lp_1600"/>
<dbReference type="EnsemblBacteria" id="CCC78914">
    <property type="protein sequence ID" value="CCC78914"/>
    <property type="gene ID" value="lp_1600"/>
</dbReference>
<dbReference type="GeneID" id="89668983"/>
<dbReference type="KEGG" id="lpl:lp_1600"/>
<dbReference type="PATRIC" id="fig|220668.9.peg.1349"/>
<dbReference type="eggNOG" id="COG1570">
    <property type="taxonomic scope" value="Bacteria"/>
</dbReference>
<dbReference type="HOGENOM" id="CLU_023625_3_1_9"/>
<dbReference type="OrthoDB" id="9802795at2"/>
<dbReference type="PhylomeDB" id="Q88WM7"/>
<dbReference type="Proteomes" id="UP000000432">
    <property type="component" value="Chromosome"/>
</dbReference>
<dbReference type="GO" id="GO:0005737">
    <property type="term" value="C:cytoplasm"/>
    <property type="evidence" value="ECO:0007669"/>
    <property type="project" value="UniProtKB-SubCell"/>
</dbReference>
<dbReference type="GO" id="GO:0009318">
    <property type="term" value="C:exodeoxyribonuclease VII complex"/>
    <property type="evidence" value="ECO:0007669"/>
    <property type="project" value="InterPro"/>
</dbReference>
<dbReference type="GO" id="GO:0008855">
    <property type="term" value="F:exodeoxyribonuclease VII activity"/>
    <property type="evidence" value="ECO:0007669"/>
    <property type="project" value="UniProtKB-UniRule"/>
</dbReference>
<dbReference type="GO" id="GO:0003676">
    <property type="term" value="F:nucleic acid binding"/>
    <property type="evidence" value="ECO:0007669"/>
    <property type="project" value="InterPro"/>
</dbReference>
<dbReference type="GO" id="GO:0006308">
    <property type="term" value="P:DNA catabolic process"/>
    <property type="evidence" value="ECO:0007669"/>
    <property type="project" value="UniProtKB-UniRule"/>
</dbReference>
<dbReference type="CDD" id="cd04489">
    <property type="entry name" value="ExoVII_LU_OBF"/>
    <property type="match status" value="1"/>
</dbReference>
<dbReference type="HAMAP" id="MF_00378">
    <property type="entry name" value="Exonuc_7_L"/>
    <property type="match status" value="1"/>
</dbReference>
<dbReference type="InterPro" id="IPR003753">
    <property type="entry name" value="Exonuc_VII_L"/>
</dbReference>
<dbReference type="InterPro" id="IPR020579">
    <property type="entry name" value="Exonuc_VII_lsu_C"/>
</dbReference>
<dbReference type="InterPro" id="IPR025824">
    <property type="entry name" value="OB-fold_nuc-bd_dom"/>
</dbReference>
<dbReference type="NCBIfam" id="TIGR00237">
    <property type="entry name" value="xseA"/>
    <property type="match status" value="1"/>
</dbReference>
<dbReference type="PANTHER" id="PTHR30008">
    <property type="entry name" value="EXODEOXYRIBONUCLEASE 7 LARGE SUBUNIT"/>
    <property type="match status" value="1"/>
</dbReference>
<dbReference type="PANTHER" id="PTHR30008:SF0">
    <property type="entry name" value="EXODEOXYRIBONUCLEASE 7 LARGE SUBUNIT"/>
    <property type="match status" value="1"/>
</dbReference>
<dbReference type="Pfam" id="PF02601">
    <property type="entry name" value="Exonuc_VII_L"/>
    <property type="match status" value="1"/>
</dbReference>
<dbReference type="Pfam" id="PF13742">
    <property type="entry name" value="tRNA_anti_2"/>
    <property type="match status" value="1"/>
</dbReference>
<organism>
    <name type="scientific">Lactiplantibacillus plantarum (strain ATCC BAA-793 / NCIMB 8826 / WCFS1)</name>
    <name type="common">Lactobacillus plantarum</name>
    <dbReference type="NCBI Taxonomy" id="220668"/>
    <lineage>
        <taxon>Bacteria</taxon>
        <taxon>Bacillati</taxon>
        <taxon>Bacillota</taxon>
        <taxon>Bacilli</taxon>
        <taxon>Lactobacillales</taxon>
        <taxon>Lactobacillaceae</taxon>
        <taxon>Lactiplantibacillus</taxon>
    </lineage>
</organism>
<name>EX7L_LACPL</name>
<proteinExistence type="inferred from homology"/>
<accession>Q88WM7</accession>
<accession>F9UNX5</accession>
<gene>
    <name evidence="1" type="primary">xseA</name>
    <name type="ordered locus">lp_1600</name>
</gene>